<reference key="1">
    <citation type="submission" date="2007-11" db="EMBL/GenBank/DDBJ databases">
        <title>Complete sequence of chromosome of Shewanella baltica OS195.</title>
        <authorList>
            <consortium name="US DOE Joint Genome Institute"/>
            <person name="Copeland A."/>
            <person name="Lucas S."/>
            <person name="Lapidus A."/>
            <person name="Barry K."/>
            <person name="Glavina del Rio T."/>
            <person name="Dalin E."/>
            <person name="Tice H."/>
            <person name="Pitluck S."/>
            <person name="Chain P."/>
            <person name="Malfatti S."/>
            <person name="Shin M."/>
            <person name="Vergez L."/>
            <person name="Schmutz J."/>
            <person name="Larimer F."/>
            <person name="Land M."/>
            <person name="Hauser L."/>
            <person name="Kyrpides N."/>
            <person name="Kim E."/>
            <person name="Brettar I."/>
            <person name="Rodrigues J."/>
            <person name="Konstantinidis K."/>
            <person name="Klappenbach J."/>
            <person name="Hofle M."/>
            <person name="Tiedje J."/>
            <person name="Richardson P."/>
        </authorList>
    </citation>
    <scope>NUCLEOTIDE SEQUENCE [LARGE SCALE GENOMIC DNA]</scope>
    <source>
        <strain>OS195</strain>
    </source>
</reference>
<feature type="chain" id="PRO_1000085638" description="Uracil phosphoribosyltransferase">
    <location>
        <begin position="1"/>
        <end position="208"/>
    </location>
</feature>
<feature type="binding site" evidence="1">
    <location>
        <position position="78"/>
    </location>
    <ligand>
        <name>5-phospho-alpha-D-ribose 1-diphosphate</name>
        <dbReference type="ChEBI" id="CHEBI:58017"/>
    </ligand>
</feature>
<feature type="binding site" evidence="1">
    <location>
        <position position="103"/>
    </location>
    <ligand>
        <name>5-phospho-alpha-D-ribose 1-diphosphate</name>
        <dbReference type="ChEBI" id="CHEBI:58017"/>
    </ligand>
</feature>
<feature type="binding site" evidence="1">
    <location>
        <begin position="130"/>
        <end position="138"/>
    </location>
    <ligand>
        <name>5-phospho-alpha-D-ribose 1-diphosphate</name>
        <dbReference type="ChEBI" id="CHEBI:58017"/>
    </ligand>
</feature>
<feature type="binding site" evidence="1">
    <location>
        <position position="193"/>
    </location>
    <ligand>
        <name>uracil</name>
        <dbReference type="ChEBI" id="CHEBI:17568"/>
    </ligand>
</feature>
<feature type="binding site" evidence="1">
    <location>
        <begin position="198"/>
        <end position="200"/>
    </location>
    <ligand>
        <name>uracil</name>
        <dbReference type="ChEBI" id="CHEBI:17568"/>
    </ligand>
</feature>
<feature type="binding site" evidence="1">
    <location>
        <position position="199"/>
    </location>
    <ligand>
        <name>5-phospho-alpha-D-ribose 1-diphosphate</name>
        <dbReference type="ChEBI" id="CHEBI:58017"/>
    </ligand>
</feature>
<accession>A9KY39</accession>
<keyword id="KW-0021">Allosteric enzyme</keyword>
<keyword id="KW-0328">Glycosyltransferase</keyword>
<keyword id="KW-0342">GTP-binding</keyword>
<keyword id="KW-0460">Magnesium</keyword>
<keyword id="KW-0547">Nucleotide-binding</keyword>
<keyword id="KW-0808">Transferase</keyword>
<protein>
    <recommendedName>
        <fullName evidence="1">Uracil phosphoribosyltransferase</fullName>
        <ecNumber evidence="1">2.4.2.9</ecNumber>
    </recommendedName>
    <alternativeName>
        <fullName evidence="1">UMP pyrophosphorylase</fullName>
    </alternativeName>
    <alternativeName>
        <fullName evidence="1">UPRTase</fullName>
    </alternativeName>
</protein>
<name>UPP_SHEB9</name>
<dbReference type="EC" id="2.4.2.9" evidence="1"/>
<dbReference type="EMBL" id="CP000891">
    <property type="protein sequence ID" value="ABX48945.1"/>
    <property type="molecule type" value="Genomic_DNA"/>
</dbReference>
<dbReference type="RefSeq" id="WP_006081245.1">
    <property type="nucleotide sequence ID" value="NC_009997.1"/>
</dbReference>
<dbReference type="SMR" id="A9KY39"/>
<dbReference type="GeneID" id="11771991"/>
<dbReference type="KEGG" id="sbn:Sbal195_1774"/>
<dbReference type="HOGENOM" id="CLU_067096_2_2_6"/>
<dbReference type="UniPathway" id="UPA00574">
    <property type="reaction ID" value="UER00636"/>
</dbReference>
<dbReference type="Proteomes" id="UP000000770">
    <property type="component" value="Chromosome"/>
</dbReference>
<dbReference type="GO" id="GO:0005525">
    <property type="term" value="F:GTP binding"/>
    <property type="evidence" value="ECO:0007669"/>
    <property type="project" value="UniProtKB-KW"/>
</dbReference>
<dbReference type="GO" id="GO:0000287">
    <property type="term" value="F:magnesium ion binding"/>
    <property type="evidence" value="ECO:0007669"/>
    <property type="project" value="UniProtKB-UniRule"/>
</dbReference>
<dbReference type="GO" id="GO:0004845">
    <property type="term" value="F:uracil phosphoribosyltransferase activity"/>
    <property type="evidence" value="ECO:0007669"/>
    <property type="project" value="UniProtKB-UniRule"/>
</dbReference>
<dbReference type="GO" id="GO:0044206">
    <property type="term" value="P:UMP salvage"/>
    <property type="evidence" value="ECO:0007669"/>
    <property type="project" value="UniProtKB-UniRule"/>
</dbReference>
<dbReference type="GO" id="GO:0006223">
    <property type="term" value="P:uracil salvage"/>
    <property type="evidence" value="ECO:0007669"/>
    <property type="project" value="InterPro"/>
</dbReference>
<dbReference type="CDD" id="cd06223">
    <property type="entry name" value="PRTases_typeI"/>
    <property type="match status" value="1"/>
</dbReference>
<dbReference type="FunFam" id="3.40.50.2020:FF:000003">
    <property type="entry name" value="Uracil phosphoribosyltransferase"/>
    <property type="match status" value="1"/>
</dbReference>
<dbReference type="Gene3D" id="3.40.50.2020">
    <property type="match status" value="1"/>
</dbReference>
<dbReference type="HAMAP" id="MF_01218_B">
    <property type="entry name" value="Upp_B"/>
    <property type="match status" value="1"/>
</dbReference>
<dbReference type="InterPro" id="IPR000836">
    <property type="entry name" value="PRibTrfase_dom"/>
</dbReference>
<dbReference type="InterPro" id="IPR029057">
    <property type="entry name" value="PRTase-like"/>
</dbReference>
<dbReference type="InterPro" id="IPR034332">
    <property type="entry name" value="Upp_B"/>
</dbReference>
<dbReference type="InterPro" id="IPR050054">
    <property type="entry name" value="UPRTase/APRTase"/>
</dbReference>
<dbReference type="InterPro" id="IPR005765">
    <property type="entry name" value="Ura_phspho_trans"/>
</dbReference>
<dbReference type="NCBIfam" id="NF001097">
    <property type="entry name" value="PRK00129.1"/>
    <property type="match status" value="1"/>
</dbReference>
<dbReference type="NCBIfam" id="TIGR01091">
    <property type="entry name" value="upp"/>
    <property type="match status" value="1"/>
</dbReference>
<dbReference type="PANTHER" id="PTHR32315">
    <property type="entry name" value="ADENINE PHOSPHORIBOSYLTRANSFERASE"/>
    <property type="match status" value="1"/>
</dbReference>
<dbReference type="PANTHER" id="PTHR32315:SF4">
    <property type="entry name" value="URACIL PHOSPHORIBOSYLTRANSFERASE, CHLOROPLASTIC"/>
    <property type="match status" value="1"/>
</dbReference>
<dbReference type="Pfam" id="PF14681">
    <property type="entry name" value="UPRTase"/>
    <property type="match status" value="1"/>
</dbReference>
<dbReference type="SUPFAM" id="SSF53271">
    <property type="entry name" value="PRTase-like"/>
    <property type="match status" value="1"/>
</dbReference>
<gene>
    <name evidence="1" type="primary">upp</name>
    <name type="ordered locus">Sbal195_1774</name>
</gene>
<proteinExistence type="inferred from homology"/>
<comment type="function">
    <text evidence="1">Catalyzes the conversion of uracil and 5-phospho-alpha-D-ribose 1-diphosphate (PRPP) to UMP and diphosphate.</text>
</comment>
<comment type="catalytic activity">
    <reaction evidence="1">
        <text>UMP + diphosphate = 5-phospho-alpha-D-ribose 1-diphosphate + uracil</text>
        <dbReference type="Rhea" id="RHEA:13017"/>
        <dbReference type="ChEBI" id="CHEBI:17568"/>
        <dbReference type="ChEBI" id="CHEBI:33019"/>
        <dbReference type="ChEBI" id="CHEBI:57865"/>
        <dbReference type="ChEBI" id="CHEBI:58017"/>
        <dbReference type="EC" id="2.4.2.9"/>
    </reaction>
</comment>
<comment type="cofactor">
    <cofactor evidence="1">
        <name>Mg(2+)</name>
        <dbReference type="ChEBI" id="CHEBI:18420"/>
    </cofactor>
    <text evidence="1">Binds 1 Mg(2+) ion per subunit. The magnesium is bound as Mg-PRPP.</text>
</comment>
<comment type="activity regulation">
    <text evidence="1">Allosterically activated by GTP.</text>
</comment>
<comment type="pathway">
    <text evidence="1">Pyrimidine metabolism; UMP biosynthesis via salvage pathway; UMP from uracil: step 1/1.</text>
</comment>
<comment type="similarity">
    <text evidence="1">Belongs to the UPRTase family.</text>
</comment>
<sequence>MKVVEVKHPLVRHKIGLMREGDISTKRFRELAAEVGSLLTYEATADFETETVTIEGWNGPVEVDQIKGKKVTVVPILRAGLGMMDGVLEHIPSARISVVGIYRDEETLEPVPYFEKLASDMNERIALVVDPMLATGGSMIATVDLLKKRGCTSIKALVLVAAPEGIKALEAAHPDIELYTAAIDKCLNEKGYILPGLGDAGDKIFGTK</sequence>
<organism>
    <name type="scientific">Shewanella baltica (strain OS195)</name>
    <dbReference type="NCBI Taxonomy" id="399599"/>
    <lineage>
        <taxon>Bacteria</taxon>
        <taxon>Pseudomonadati</taxon>
        <taxon>Pseudomonadota</taxon>
        <taxon>Gammaproteobacteria</taxon>
        <taxon>Alteromonadales</taxon>
        <taxon>Shewanellaceae</taxon>
        <taxon>Shewanella</taxon>
    </lineage>
</organism>
<evidence type="ECO:0000255" key="1">
    <source>
        <dbReference type="HAMAP-Rule" id="MF_01218"/>
    </source>
</evidence>